<name>DNAE2_BURPS</name>
<accession>Q63XR8</accession>
<proteinExistence type="inferred from homology"/>
<dbReference type="EC" id="2.7.7.7" evidence="1"/>
<dbReference type="EMBL" id="BX571965">
    <property type="protein sequence ID" value="CAH34461.1"/>
    <property type="molecule type" value="Genomic_DNA"/>
</dbReference>
<dbReference type="RefSeq" id="WP_004543942.1">
    <property type="nucleotide sequence ID" value="NZ_CP009538.1"/>
</dbReference>
<dbReference type="RefSeq" id="YP_107097.1">
    <property type="nucleotide sequence ID" value="NC_006350.1"/>
</dbReference>
<dbReference type="SMR" id="Q63XR8"/>
<dbReference type="STRING" id="272560.BPSL0472"/>
<dbReference type="KEGG" id="bps:BPSL0472"/>
<dbReference type="PATRIC" id="fig|272560.51.peg.1183"/>
<dbReference type="eggNOG" id="COG0587">
    <property type="taxonomic scope" value="Bacteria"/>
</dbReference>
<dbReference type="Proteomes" id="UP000000605">
    <property type="component" value="Chromosome 1"/>
</dbReference>
<dbReference type="GO" id="GO:0005737">
    <property type="term" value="C:cytoplasm"/>
    <property type="evidence" value="ECO:0007669"/>
    <property type="project" value="UniProtKB-SubCell"/>
</dbReference>
<dbReference type="GO" id="GO:0008408">
    <property type="term" value="F:3'-5' exonuclease activity"/>
    <property type="evidence" value="ECO:0007669"/>
    <property type="project" value="InterPro"/>
</dbReference>
<dbReference type="GO" id="GO:0003887">
    <property type="term" value="F:DNA-directed DNA polymerase activity"/>
    <property type="evidence" value="ECO:0007669"/>
    <property type="project" value="UniProtKB-UniRule"/>
</dbReference>
<dbReference type="GO" id="GO:0006281">
    <property type="term" value="P:DNA repair"/>
    <property type="evidence" value="ECO:0007669"/>
    <property type="project" value="UniProtKB-UniRule"/>
</dbReference>
<dbReference type="GO" id="GO:0006260">
    <property type="term" value="P:DNA replication"/>
    <property type="evidence" value="ECO:0007669"/>
    <property type="project" value="UniProtKB-KW"/>
</dbReference>
<dbReference type="CDD" id="cd04485">
    <property type="entry name" value="DnaE_OBF"/>
    <property type="match status" value="1"/>
</dbReference>
<dbReference type="CDD" id="cd07434">
    <property type="entry name" value="PHP_PolIIIA_DnaE2"/>
    <property type="match status" value="1"/>
</dbReference>
<dbReference type="Gene3D" id="1.10.150.870">
    <property type="match status" value="1"/>
</dbReference>
<dbReference type="Gene3D" id="3.20.20.140">
    <property type="entry name" value="Metal-dependent hydrolases"/>
    <property type="match status" value="1"/>
</dbReference>
<dbReference type="HAMAP" id="MF_01902">
    <property type="entry name" value="DNApol_error_prone"/>
    <property type="match status" value="1"/>
</dbReference>
<dbReference type="InterPro" id="IPR011708">
    <property type="entry name" value="DNA_pol3_alpha_NTPase_dom"/>
</dbReference>
<dbReference type="InterPro" id="IPR040982">
    <property type="entry name" value="DNA_pol3_finger"/>
</dbReference>
<dbReference type="InterPro" id="IPR023073">
    <property type="entry name" value="DnaE2"/>
</dbReference>
<dbReference type="InterPro" id="IPR004805">
    <property type="entry name" value="DnaE2/DnaE/PolC"/>
</dbReference>
<dbReference type="InterPro" id="IPR029460">
    <property type="entry name" value="DNAPol_HHH"/>
</dbReference>
<dbReference type="InterPro" id="IPR004013">
    <property type="entry name" value="PHP_dom"/>
</dbReference>
<dbReference type="InterPro" id="IPR003141">
    <property type="entry name" value="Pol/His_phosphatase_N"/>
</dbReference>
<dbReference type="InterPro" id="IPR016195">
    <property type="entry name" value="Pol/histidinol_Pase-like"/>
</dbReference>
<dbReference type="NCBIfam" id="TIGR00594">
    <property type="entry name" value="polc"/>
    <property type="match status" value="1"/>
</dbReference>
<dbReference type="NCBIfam" id="NF004225">
    <property type="entry name" value="PRK05672.1"/>
    <property type="match status" value="1"/>
</dbReference>
<dbReference type="PANTHER" id="PTHR32294">
    <property type="entry name" value="DNA POLYMERASE III SUBUNIT ALPHA"/>
    <property type="match status" value="1"/>
</dbReference>
<dbReference type="PANTHER" id="PTHR32294:SF4">
    <property type="entry name" value="ERROR-PRONE DNA POLYMERASE"/>
    <property type="match status" value="1"/>
</dbReference>
<dbReference type="Pfam" id="PF07733">
    <property type="entry name" value="DNA_pol3_alpha"/>
    <property type="match status" value="1"/>
</dbReference>
<dbReference type="Pfam" id="PF17657">
    <property type="entry name" value="DNA_pol3_finger"/>
    <property type="match status" value="1"/>
</dbReference>
<dbReference type="Pfam" id="PF14579">
    <property type="entry name" value="HHH_6"/>
    <property type="match status" value="1"/>
</dbReference>
<dbReference type="Pfam" id="PF02811">
    <property type="entry name" value="PHP"/>
    <property type="match status" value="1"/>
</dbReference>
<dbReference type="SMART" id="SM00481">
    <property type="entry name" value="POLIIIAc"/>
    <property type="match status" value="1"/>
</dbReference>
<dbReference type="SUPFAM" id="SSF89550">
    <property type="entry name" value="PHP domain-like"/>
    <property type="match status" value="1"/>
</dbReference>
<protein>
    <recommendedName>
        <fullName evidence="1">Error-prone DNA polymerase</fullName>
        <ecNumber evidence="1">2.7.7.7</ecNumber>
    </recommendedName>
</protein>
<organism>
    <name type="scientific">Burkholderia pseudomallei (strain K96243)</name>
    <dbReference type="NCBI Taxonomy" id="272560"/>
    <lineage>
        <taxon>Bacteria</taxon>
        <taxon>Pseudomonadati</taxon>
        <taxon>Pseudomonadota</taxon>
        <taxon>Betaproteobacteria</taxon>
        <taxon>Burkholderiales</taxon>
        <taxon>Burkholderiaceae</taxon>
        <taxon>Burkholderia</taxon>
        <taxon>pseudomallei group</taxon>
    </lineage>
</organism>
<comment type="function">
    <text evidence="1">DNA polymerase involved in damage-induced mutagenesis and translesion synthesis (TLS). It is not the major replicative DNA polymerase.</text>
</comment>
<comment type="catalytic activity">
    <reaction evidence="1">
        <text>DNA(n) + a 2'-deoxyribonucleoside 5'-triphosphate = DNA(n+1) + diphosphate</text>
        <dbReference type="Rhea" id="RHEA:22508"/>
        <dbReference type="Rhea" id="RHEA-COMP:17339"/>
        <dbReference type="Rhea" id="RHEA-COMP:17340"/>
        <dbReference type="ChEBI" id="CHEBI:33019"/>
        <dbReference type="ChEBI" id="CHEBI:61560"/>
        <dbReference type="ChEBI" id="CHEBI:173112"/>
        <dbReference type="EC" id="2.7.7.7"/>
    </reaction>
</comment>
<comment type="subcellular location">
    <subcellularLocation>
        <location evidence="1">Cytoplasm</location>
    </subcellularLocation>
</comment>
<comment type="similarity">
    <text evidence="1">Belongs to the DNA polymerase type-C family. DnaE2 subfamily.</text>
</comment>
<evidence type="ECO:0000255" key="1">
    <source>
        <dbReference type="HAMAP-Rule" id="MF_01902"/>
    </source>
</evidence>
<feature type="chain" id="PRO_0000103374" description="Error-prone DNA polymerase">
    <location>
        <begin position="1"/>
        <end position="1072"/>
    </location>
</feature>
<keyword id="KW-0963">Cytoplasm</keyword>
<keyword id="KW-0227">DNA damage</keyword>
<keyword id="KW-0234">DNA repair</keyword>
<keyword id="KW-0235">DNA replication</keyword>
<keyword id="KW-0239">DNA-directed DNA polymerase</keyword>
<keyword id="KW-0548">Nucleotidyltransferase</keyword>
<keyword id="KW-1185">Reference proteome</keyword>
<keyword id="KW-0808">Transferase</keyword>
<gene>
    <name evidence="1" type="primary">dnaE2</name>
    <name type="ordered locus">BPSL0472</name>
</gene>
<reference key="1">
    <citation type="journal article" date="2004" name="Proc. Natl. Acad. Sci. U.S.A.">
        <title>Genomic plasticity of the causative agent of melioidosis, Burkholderia pseudomallei.</title>
        <authorList>
            <person name="Holden M.T.G."/>
            <person name="Titball R.W."/>
            <person name="Peacock S.J."/>
            <person name="Cerdeno-Tarraga A.-M."/>
            <person name="Atkins T."/>
            <person name="Crossman L.C."/>
            <person name="Pitt T."/>
            <person name="Churcher C."/>
            <person name="Mungall K.L."/>
            <person name="Bentley S.D."/>
            <person name="Sebaihia M."/>
            <person name="Thomson N.R."/>
            <person name="Bason N."/>
            <person name="Beacham I.R."/>
            <person name="Brooks K."/>
            <person name="Brown K.A."/>
            <person name="Brown N.F."/>
            <person name="Challis G.L."/>
            <person name="Cherevach I."/>
            <person name="Chillingworth T."/>
            <person name="Cronin A."/>
            <person name="Crossett B."/>
            <person name="Davis P."/>
            <person name="DeShazer D."/>
            <person name="Feltwell T."/>
            <person name="Fraser A."/>
            <person name="Hance Z."/>
            <person name="Hauser H."/>
            <person name="Holroyd S."/>
            <person name="Jagels K."/>
            <person name="Keith K.E."/>
            <person name="Maddison M."/>
            <person name="Moule S."/>
            <person name="Price C."/>
            <person name="Quail M.A."/>
            <person name="Rabbinowitsch E."/>
            <person name="Rutherford K."/>
            <person name="Sanders M."/>
            <person name="Simmonds M."/>
            <person name="Songsivilai S."/>
            <person name="Stevens K."/>
            <person name="Tumapa S."/>
            <person name="Vesaratchavest M."/>
            <person name="Whitehead S."/>
            <person name="Yeats C."/>
            <person name="Barrell B.G."/>
            <person name="Oyston P.C.F."/>
            <person name="Parkhill J."/>
        </authorList>
    </citation>
    <scope>NUCLEOTIDE SEQUENCE [LARGE SCALE GENOMIC DNA]</scope>
    <source>
        <strain>K96243</strain>
    </source>
</reference>
<sequence length="1072" mass="118134">MDAASGILPDYAELFCRSNFSFLHGASSAEELVERAAKQGYRGIAITDECSLAGAPRMHVAAKAVGLPLVVGAYFGVTPDDAAPGHDPGPGAFGLVLLAQNREGYGNLSELISWRRMNAPKGTYRLTPRMLAAPPRALAHLRGVPDCFAILVPTYPARADVLDAQLAWFDALFGERARLGLVQLQRALDGAHREQVRAAGERRGMHIVALGDVTMHIRSCKPLQDTMTAIRLGMPIAECGHALAPNGEQHLRTRQRIAQLFPADALAQTCRMLDACHFSLDDLRYEYPHEIVPAGHTPTSYLAQETWAGARRRYPDGVPDTVRQRIEFELALIADLKYEPYFLTVYDIVKYARSKDILCQGRGSAANSVVCYCLGVTEVNPQQSTLLFERFLSRERGEPPDIDVDFEHQRREEVIQYLYEKYGHDRAALAAAVSTYRPRGALRETGKALGVDPMLVERVAKEHRWFDGSRDLLARFASVGLDPEVPLIRTWAEIAARLLNFPRHLSQHSGGFVVSRGKLTRLVPVENAAMEGRRVIQWDKDDLEALGLMKVDVLALGMLSALHRAFDMITAWRGPPLPDGRPFRLEHIPQDDEATYDMICRADTVGVFQIESRAQMSMLPRLRPRGYYDLVVQVSIVRPGPIQGGAVHPYLERRRIAAGEAHGEITYPSEALERVLERTLGIPIFQEQVMQIAIVAAGFTPGEADALRRAMAAWKRKGDLGKYHERIVAGMLERGYSREFAEQIFEQIKGFGEYGFPESHAASFAKLAYASSWLKRHEPAIFLAALLNSQPMGFYPPAQLVQDAKRHGVTVLPIDATKSGWEASLEAQPGAAPPDGRPAVRLGLSLVRGLGEEAARRIGAARAAGPFASVDELARRACLERRDLEALAAANAFATLAGNRRDALWQAVAAAPERGLLAAAPIDEAVRPALGAPTEADDVFADYRTIGLTLNRHPVALLRPALDARRLSSAAALRDRRNGRLARACGLVTARQMPGTAKGVLFVTLEDETGCVNVIVRPELLERQRRETLDSQLLAVSGVWQCESDVRHLVAQYLEDLTPLIAGLRTESREFH</sequence>